<feature type="chain" id="PRO_0000296772" description="DNA-directed RNA polymerase subunit alpha">
    <location>
        <begin position="1"/>
        <end position="341"/>
    </location>
</feature>
<feature type="region of interest" description="Alpha N-terminal domain (alpha-NTD)" evidence="1">
    <location>
        <begin position="1"/>
        <end position="226"/>
    </location>
</feature>
<feature type="region of interest" description="Alpha C-terminal domain (alpha-CTD)" evidence="1">
    <location>
        <begin position="241"/>
        <end position="341"/>
    </location>
</feature>
<proteinExistence type="inferred from homology"/>
<name>RPOA_ACIC1</name>
<organism>
    <name type="scientific">Acidothermus cellulolyticus (strain ATCC 43068 / DSM 8971 / 11B)</name>
    <dbReference type="NCBI Taxonomy" id="351607"/>
    <lineage>
        <taxon>Bacteria</taxon>
        <taxon>Bacillati</taxon>
        <taxon>Actinomycetota</taxon>
        <taxon>Actinomycetes</taxon>
        <taxon>Acidothermales</taxon>
        <taxon>Acidothermaceae</taxon>
        <taxon>Acidothermus</taxon>
    </lineage>
</organism>
<sequence>MLIAQRPTITEEPVHDTRSRFVIEPLEPGFGYTLGNSLRRTLLSSIPGAAVTSLRIDGVLHEFSTVPGAKEDVTEMILNIKELVVSSEHDDPQVIYLRKQGPCEVTAADIVAPAGVEVHNPDLHIATLNDKGKLEIEMVVERGRGYVPAAQNKLPGHEIGRIPIDSIYSPVLKVTYKVEATRVEQRTDFDRLIMDVETKPSMRPRDAMASAGKTLVELFGLVRELNVDAEGIDIGPSPSDAALAADLALPIEDLNLTVRSYNCLKREGIHTVGELVARSEADLLDIRNFGQKSIEEVKTKLAEMGLSLKDSPPGFDPGRVVYSASRSDYDEDQRYIETEQL</sequence>
<evidence type="ECO:0000255" key="1">
    <source>
        <dbReference type="HAMAP-Rule" id="MF_00059"/>
    </source>
</evidence>
<comment type="function">
    <text evidence="1">DNA-dependent RNA polymerase catalyzes the transcription of DNA into RNA using the four ribonucleoside triphosphates as substrates.</text>
</comment>
<comment type="catalytic activity">
    <reaction evidence="1">
        <text>RNA(n) + a ribonucleoside 5'-triphosphate = RNA(n+1) + diphosphate</text>
        <dbReference type="Rhea" id="RHEA:21248"/>
        <dbReference type="Rhea" id="RHEA-COMP:14527"/>
        <dbReference type="Rhea" id="RHEA-COMP:17342"/>
        <dbReference type="ChEBI" id="CHEBI:33019"/>
        <dbReference type="ChEBI" id="CHEBI:61557"/>
        <dbReference type="ChEBI" id="CHEBI:140395"/>
        <dbReference type="EC" id="2.7.7.6"/>
    </reaction>
</comment>
<comment type="subunit">
    <text evidence="1">Homodimer. The RNAP catalytic core consists of 2 alpha, 1 beta, 1 beta' and 1 omega subunit. When a sigma factor is associated with the core the holoenzyme is formed, which can initiate transcription.</text>
</comment>
<comment type="domain">
    <text evidence="1">The N-terminal domain is essential for RNAP assembly and basal transcription, whereas the C-terminal domain is involved in interaction with transcriptional regulators and with upstream promoter elements.</text>
</comment>
<comment type="similarity">
    <text evidence="1">Belongs to the RNA polymerase alpha chain family.</text>
</comment>
<dbReference type="EC" id="2.7.7.6" evidence="1"/>
<dbReference type="EMBL" id="CP000481">
    <property type="protein sequence ID" value="ABK52108.1"/>
    <property type="molecule type" value="Genomic_DNA"/>
</dbReference>
<dbReference type="RefSeq" id="WP_011719171.1">
    <property type="nucleotide sequence ID" value="NC_008578.1"/>
</dbReference>
<dbReference type="SMR" id="A0LRP8"/>
<dbReference type="FunCoup" id="A0LRP8">
    <property type="interactions" value="140"/>
</dbReference>
<dbReference type="STRING" id="351607.Acel_0334"/>
<dbReference type="KEGG" id="ace:Acel_0334"/>
<dbReference type="eggNOG" id="COG0202">
    <property type="taxonomic scope" value="Bacteria"/>
</dbReference>
<dbReference type="HOGENOM" id="CLU_053084_0_1_11"/>
<dbReference type="InParanoid" id="A0LRP8"/>
<dbReference type="OrthoDB" id="9805706at2"/>
<dbReference type="Proteomes" id="UP000008221">
    <property type="component" value="Chromosome"/>
</dbReference>
<dbReference type="GO" id="GO:0005737">
    <property type="term" value="C:cytoplasm"/>
    <property type="evidence" value="ECO:0007669"/>
    <property type="project" value="UniProtKB-ARBA"/>
</dbReference>
<dbReference type="GO" id="GO:0000428">
    <property type="term" value="C:DNA-directed RNA polymerase complex"/>
    <property type="evidence" value="ECO:0007669"/>
    <property type="project" value="UniProtKB-KW"/>
</dbReference>
<dbReference type="GO" id="GO:0003677">
    <property type="term" value="F:DNA binding"/>
    <property type="evidence" value="ECO:0007669"/>
    <property type="project" value="UniProtKB-UniRule"/>
</dbReference>
<dbReference type="GO" id="GO:0003899">
    <property type="term" value="F:DNA-directed RNA polymerase activity"/>
    <property type="evidence" value="ECO:0007669"/>
    <property type="project" value="UniProtKB-UniRule"/>
</dbReference>
<dbReference type="GO" id="GO:0046983">
    <property type="term" value="F:protein dimerization activity"/>
    <property type="evidence" value="ECO:0007669"/>
    <property type="project" value="InterPro"/>
</dbReference>
<dbReference type="GO" id="GO:0006351">
    <property type="term" value="P:DNA-templated transcription"/>
    <property type="evidence" value="ECO:0007669"/>
    <property type="project" value="UniProtKB-UniRule"/>
</dbReference>
<dbReference type="CDD" id="cd06928">
    <property type="entry name" value="RNAP_alpha_NTD"/>
    <property type="match status" value="1"/>
</dbReference>
<dbReference type="FunFam" id="1.10.150.20:FF:000001">
    <property type="entry name" value="DNA-directed RNA polymerase subunit alpha"/>
    <property type="match status" value="1"/>
</dbReference>
<dbReference type="FunFam" id="2.170.120.12:FF:000001">
    <property type="entry name" value="DNA-directed RNA polymerase subunit alpha"/>
    <property type="match status" value="1"/>
</dbReference>
<dbReference type="Gene3D" id="1.10.150.20">
    <property type="entry name" value="5' to 3' exonuclease, C-terminal subdomain"/>
    <property type="match status" value="1"/>
</dbReference>
<dbReference type="Gene3D" id="2.170.120.12">
    <property type="entry name" value="DNA-directed RNA polymerase, insert domain"/>
    <property type="match status" value="1"/>
</dbReference>
<dbReference type="Gene3D" id="3.30.1360.10">
    <property type="entry name" value="RNA polymerase, RBP11-like subunit"/>
    <property type="match status" value="1"/>
</dbReference>
<dbReference type="HAMAP" id="MF_00059">
    <property type="entry name" value="RNApol_bact_RpoA"/>
    <property type="match status" value="1"/>
</dbReference>
<dbReference type="InterPro" id="IPR011262">
    <property type="entry name" value="DNA-dir_RNA_pol_insert"/>
</dbReference>
<dbReference type="InterPro" id="IPR011263">
    <property type="entry name" value="DNA-dir_RNA_pol_RpoA/D/Rpb3"/>
</dbReference>
<dbReference type="InterPro" id="IPR011773">
    <property type="entry name" value="DNA-dir_RpoA"/>
</dbReference>
<dbReference type="InterPro" id="IPR036603">
    <property type="entry name" value="RBP11-like"/>
</dbReference>
<dbReference type="InterPro" id="IPR011260">
    <property type="entry name" value="RNAP_asu_C"/>
</dbReference>
<dbReference type="InterPro" id="IPR036643">
    <property type="entry name" value="RNApol_insert_sf"/>
</dbReference>
<dbReference type="NCBIfam" id="NF003513">
    <property type="entry name" value="PRK05182.1-2"/>
    <property type="match status" value="1"/>
</dbReference>
<dbReference type="NCBIfam" id="NF003514">
    <property type="entry name" value="PRK05182.1-4"/>
    <property type="match status" value="1"/>
</dbReference>
<dbReference type="NCBIfam" id="NF003519">
    <property type="entry name" value="PRK05182.2-5"/>
    <property type="match status" value="1"/>
</dbReference>
<dbReference type="NCBIfam" id="TIGR02027">
    <property type="entry name" value="rpoA"/>
    <property type="match status" value="1"/>
</dbReference>
<dbReference type="Pfam" id="PF01000">
    <property type="entry name" value="RNA_pol_A_bac"/>
    <property type="match status" value="1"/>
</dbReference>
<dbReference type="Pfam" id="PF03118">
    <property type="entry name" value="RNA_pol_A_CTD"/>
    <property type="match status" value="1"/>
</dbReference>
<dbReference type="Pfam" id="PF01193">
    <property type="entry name" value="RNA_pol_L"/>
    <property type="match status" value="1"/>
</dbReference>
<dbReference type="SMART" id="SM00662">
    <property type="entry name" value="RPOLD"/>
    <property type="match status" value="1"/>
</dbReference>
<dbReference type="SUPFAM" id="SSF47789">
    <property type="entry name" value="C-terminal domain of RNA polymerase alpha subunit"/>
    <property type="match status" value="1"/>
</dbReference>
<dbReference type="SUPFAM" id="SSF56553">
    <property type="entry name" value="Insert subdomain of RNA polymerase alpha subunit"/>
    <property type="match status" value="1"/>
</dbReference>
<dbReference type="SUPFAM" id="SSF55257">
    <property type="entry name" value="RBP11-like subunits of RNA polymerase"/>
    <property type="match status" value="1"/>
</dbReference>
<accession>A0LRP8</accession>
<protein>
    <recommendedName>
        <fullName evidence="1">DNA-directed RNA polymerase subunit alpha</fullName>
        <shortName evidence="1">RNAP subunit alpha</shortName>
        <ecNumber evidence="1">2.7.7.6</ecNumber>
    </recommendedName>
    <alternativeName>
        <fullName evidence="1">RNA polymerase subunit alpha</fullName>
    </alternativeName>
    <alternativeName>
        <fullName evidence="1">Transcriptase subunit alpha</fullName>
    </alternativeName>
</protein>
<keyword id="KW-0240">DNA-directed RNA polymerase</keyword>
<keyword id="KW-0548">Nucleotidyltransferase</keyword>
<keyword id="KW-1185">Reference proteome</keyword>
<keyword id="KW-0804">Transcription</keyword>
<keyword id="KW-0808">Transferase</keyword>
<reference key="1">
    <citation type="journal article" date="2009" name="Genome Res.">
        <title>Complete genome of the cellulolytic thermophile Acidothermus cellulolyticus 11B provides insights into its ecophysiological and evolutionary adaptations.</title>
        <authorList>
            <person name="Barabote R.D."/>
            <person name="Xie G."/>
            <person name="Leu D.H."/>
            <person name="Normand P."/>
            <person name="Necsulea A."/>
            <person name="Daubin V."/>
            <person name="Medigue C."/>
            <person name="Adney W.S."/>
            <person name="Xu X.C."/>
            <person name="Lapidus A."/>
            <person name="Parales R.E."/>
            <person name="Detter C."/>
            <person name="Pujic P."/>
            <person name="Bruce D."/>
            <person name="Lavire C."/>
            <person name="Challacombe J.F."/>
            <person name="Brettin T.S."/>
            <person name="Berry A.M."/>
        </authorList>
    </citation>
    <scope>NUCLEOTIDE SEQUENCE [LARGE SCALE GENOMIC DNA]</scope>
    <source>
        <strain>ATCC 43068 / DSM 8971 / 11B</strain>
    </source>
</reference>
<gene>
    <name evidence="1" type="primary">rpoA</name>
    <name type="ordered locus">Acel_0334</name>
</gene>